<organism>
    <name type="scientific">Brucella melitensis biotype 1 (strain ATCC 23456 / CCUG 17765 / NCTC 10094 / 16M)</name>
    <dbReference type="NCBI Taxonomy" id="224914"/>
    <lineage>
        <taxon>Bacteria</taxon>
        <taxon>Pseudomonadati</taxon>
        <taxon>Pseudomonadota</taxon>
        <taxon>Alphaproteobacteria</taxon>
        <taxon>Hyphomicrobiales</taxon>
        <taxon>Brucellaceae</taxon>
        <taxon>Brucella/Ochrobactrum group</taxon>
        <taxon>Brucella</taxon>
    </lineage>
</organism>
<accession>P63933</accession>
<accession>Q8YGR8</accession>
<comment type="similarity">
    <text evidence="1">Belongs to the dGTPase family. Type 2 subfamily.</text>
</comment>
<evidence type="ECO:0000255" key="1">
    <source>
        <dbReference type="HAMAP-Rule" id="MF_01212"/>
    </source>
</evidence>
<evidence type="ECO:0000255" key="2">
    <source>
        <dbReference type="PROSITE-ProRule" id="PRU01175"/>
    </source>
</evidence>
<evidence type="ECO:0000256" key="3">
    <source>
        <dbReference type="SAM" id="MobiDB-lite"/>
    </source>
</evidence>
<dbReference type="EMBL" id="AE008917">
    <property type="protein sequence ID" value="AAL52271.1"/>
    <property type="molecule type" value="Genomic_DNA"/>
</dbReference>
<dbReference type="PIR" id="AD3388">
    <property type="entry name" value="AD3388"/>
</dbReference>
<dbReference type="RefSeq" id="WP_004683694.1">
    <property type="nucleotide sequence ID" value="NZ_GG703778.1"/>
</dbReference>
<dbReference type="SMR" id="P63933"/>
<dbReference type="KEGG" id="bme:BMEI1090"/>
<dbReference type="KEGG" id="bmel:DK63_322"/>
<dbReference type="PATRIC" id="fig|224914.52.peg.333"/>
<dbReference type="eggNOG" id="COG0232">
    <property type="taxonomic scope" value="Bacteria"/>
</dbReference>
<dbReference type="PhylomeDB" id="P63933"/>
<dbReference type="Proteomes" id="UP000000419">
    <property type="component" value="Chromosome I"/>
</dbReference>
<dbReference type="GO" id="GO:0008832">
    <property type="term" value="F:dGTPase activity"/>
    <property type="evidence" value="ECO:0007669"/>
    <property type="project" value="TreeGrafter"/>
</dbReference>
<dbReference type="GO" id="GO:0006203">
    <property type="term" value="P:dGTP catabolic process"/>
    <property type="evidence" value="ECO:0007669"/>
    <property type="project" value="TreeGrafter"/>
</dbReference>
<dbReference type="CDD" id="cd00077">
    <property type="entry name" value="HDc"/>
    <property type="match status" value="1"/>
</dbReference>
<dbReference type="Gene3D" id="1.10.3210.10">
    <property type="entry name" value="Hypothetical protein af1432"/>
    <property type="match status" value="1"/>
</dbReference>
<dbReference type="HAMAP" id="MF_01212">
    <property type="entry name" value="dGTPase_type2"/>
    <property type="match status" value="1"/>
</dbReference>
<dbReference type="InterPro" id="IPR006261">
    <property type="entry name" value="dGTPase"/>
</dbReference>
<dbReference type="InterPro" id="IPR050135">
    <property type="entry name" value="dGTPase-like"/>
</dbReference>
<dbReference type="InterPro" id="IPR023023">
    <property type="entry name" value="dNTPase_2"/>
</dbReference>
<dbReference type="InterPro" id="IPR003607">
    <property type="entry name" value="HD/PDEase_dom"/>
</dbReference>
<dbReference type="InterPro" id="IPR006674">
    <property type="entry name" value="HD_domain"/>
</dbReference>
<dbReference type="InterPro" id="IPR006675">
    <property type="entry name" value="HDIG_dom"/>
</dbReference>
<dbReference type="InterPro" id="IPR026875">
    <property type="entry name" value="PHydrolase_assoc_dom"/>
</dbReference>
<dbReference type="NCBIfam" id="TIGR01353">
    <property type="entry name" value="dGTP_triPase"/>
    <property type="match status" value="1"/>
</dbReference>
<dbReference type="NCBIfam" id="TIGR00277">
    <property type="entry name" value="HDIG"/>
    <property type="match status" value="1"/>
</dbReference>
<dbReference type="NCBIfam" id="NF002326">
    <property type="entry name" value="PRK01286.1-1"/>
    <property type="match status" value="1"/>
</dbReference>
<dbReference type="NCBIfam" id="NF002328">
    <property type="entry name" value="PRK01286.1-3"/>
    <property type="match status" value="1"/>
</dbReference>
<dbReference type="PANTHER" id="PTHR11373:SF43">
    <property type="entry name" value="DEOXYGUANOSINETRIPHOSPHATE TRIPHOSPHOHYDROLASE-LIKE PROTEIN"/>
    <property type="match status" value="1"/>
</dbReference>
<dbReference type="PANTHER" id="PTHR11373">
    <property type="entry name" value="DEOXYNUCLEOSIDE TRIPHOSPHATE TRIPHOSPHOHYDROLASE"/>
    <property type="match status" value="1"/>
</dbReference>
<dbReference type="Pfam" id="PF01966">
    <property type="entry name" value="HD"/>
    <property type="match status" value="1"/>
</dbReference>
<dbReference type="Pfam" id="PF13286">
    <property type="entry name" value="HD_assoc"/>
    <property type="match status" value="1"/>
</dbReference>
<dbReference type="SMART" id="SM00471">
    <property type="entry name" value="HDc"/>
    <property type="match status" value="1"/>
</dbReference>
<dbReference type="SUPFAM" id="SSF109604">
    <property type="entry name" value="HD-domain/PDEase-like"/>
    <property type="match status" value="1"/>
</dbReference>
<dbReference type="PROSITE" id="PS51831">
    <property type="entry name" value="HD"/>
    <property type="match status" value="1"/>
</dbReference>
<sequence>MSLEGIGFGYRERAPYASNPAFSRGRLVPEPESPTRTPFQRDRDRIIHSTAFRRLKHKTQVFIAHEGDHYRTRLTHTIEVAQIARALARALRLDEDLAEAVALVHDFGHTPFGHTGEDALNERMKNFGGFDHNAQSLRIVTKLEHRYADFDGLNLSWETLEGLVKHNGPLLGPYAAHPDIPVPQPILDFNARYDLELSRFASLEAQCAAIADDIAYNAHDIDDGLRAGLLTLESLDEVPLAKRLLDIVRTRYPNLDPVRTGHELVRRQITIMVEDVIEEAQRRLASARPGTMEDVHNQPRALVGFSDAMRAEEKVLKRFLFKNLYFHESVVVRRHAADRIVQDLFDACFTDPSLMPDEWRLGCEALDKAALARRVADYLAGMTDNYAVREHRRLFDRTPDLA</sequence>
<name>DGTL1_BRUME</name>
<proteinExistence type="inferred from homology"/>
<protein>
    <recommendedName>
        <fullName evidence="1">Deoxyguanosinetriphosphate triphosphohydrolase-like protein</fullName>
    </recommendedName>
</protein>
<gene>
    <name type="ordered locus">BMEI1090</name>
</gene>
<reference key="1">
    <citation type="journal article" date="2002" name="Proc. Natl. Acad. Sci. U.S.A.">
        <title>The genome sequence of the facultative intracellular pathogen Brucella melitensis.</title>
        <authorList>
            <person name="DelVecchio V.G."/>
            <person name="Kapatral V."/>
            <person name="Redkar R.J."/>
            <person name="Patra G."/>
            <person name="Mujer C."/>
            <person name="Los T."/>
            <person name="Ivanova N."/>
            <person name="Anderson I."/>
            <person name="Bhattacharyya A."/>
            <person name="Lykidis A."/>
            <person name="Reznik G."/>
            <person name="Jablonski L."/>
            <person name="Larsen N."/>
            <person name="D'Souza M."/>
            <person name="Bernal A."/>
            <person name="Mazur M."/>
            <person name="Goltsman E."/>
            <person name="Selkov E."/>
            <person name="Elzer P.H."/>
            <person name="Hagius S."/>
            <person name="O'Callaghan D."/>
            <person name="Letesson J.-J."/>
            <person name="Haselkorn R."/>
            <person name="Kyrpides N.C."/>
            <person name="Overbeek R."/>
        </authorList>
    </citation>
    <scope>NUCLEOTIDE SEQUENCE [LARGE SCALE GENOMIC DNA]</scope>
    <source>
        <strain>ATCC 23456 / CCUG 17765 / NCTC 10094 / 16M</strain>
    </source>
</reference>
<keyword id="KW-0378">Hydrolase</keyword>
<feature type="chain" id="PRO_0000205296" description="Deoxyguanosinetriphosphate triphosphohydrolase-like protein">
    <location>
        <begin position="1"/>
        <end position="402"/>
    </location>
</feature>
<feature type="domain" description="HD" evidence="2">
    <location>
        <begin position="73"/>
        <end position="217"/>
    </location>
</feature>
<feature type="region of interest" description="Disordered" evidence="3">
    <location>
        <begin position="20"/>
        <end position="39"/>
    </location>
</feature>